<evidence type="ECO:0000250" key="1"/>
<evidence type="ECO:0000250" key="2">
    <source>
        <dbReference type="UniProtKB" id="P50440"/>
    </source>
</evidence>
<evidence type="ECO:0000250" key="3">
    <source>
        <dbReference type="UniProtKB" id="P50441"/>
    </source>
</evidence>
<evidence type="ECO:0000255" key="4"/>
<evidence type="ECO:0000305" key="5"/>
<evidence type="ECO:0000312" key="6">
    <source>
        <dbReference type="EMBL" id="AAH61399.1"/>
    </source>
</evidence>
<evidence type="ECO:0000312" key="7">
    <source>
        <dbReference type="EMBL" id="CAJ82904.1"/>
    </source>
</evidence>
<evidence type="ECO:0000312" key="8">
    <source>
        <dbReference type="Xenbase" id="XB-GENE-974514"/>
    </source>
</evidence>
<reference evidence="7" key="1">
    <citation type="submission" date="2006-10" db="EMBL/GenBank/DDBJ databases">
        <authorList>
            <consortium name="Sanger Xenopus tropicalis EST/cDNA project"/>
        </authorList>
    </citation>
    <scope>NUCLEOTIDE SEQUENCE [LARGE SCALE MRNA]</scope>
    <source>
        <tissue evidence="7">Tadpole</tissue>
    </source>
</reference>
<reference evidence="7" key="2">
    <citation type="submission" date="2003-11" db="EMBL/GenBank/DDBJ databases">
        <authorList>
            <consortium name="NIH - Xenopus Gene Collection (XGC) project"/>
        </authorList>
    </citation>
    <scope>NUCLEOTIDE SEQUENCE [LARGE SCALE MRNA]</scope>
    <source>
        <tissue evidence="6">Neurula</tissue>
    </source>
</reference>
<protein>
    <recommendedName>
        <fullName evidence="2">Glycine amidinotransferase, mitochondrial</fullName>
        <ecNumber evidence="2">2.1.4.1</ecNumber>
    </recommendedName>
    <alternativeName>
        <fullName evidence="2">L-arginine:glycine amidinotransferase</fullName>
    </alternativeName>
    <alternativeName>
        <fullName evidence="2">Transamidinase</fullName>
    </alternativeName>
</protein>
<gene>
    <name evidence="7 8" type="primary">gatm</name>
</gene>
<keyword id="KW-0472">Membrane</keyword>
<keyword id="KW-0496">Mitochondrion</keyword>
<keyword id="KW-0999">Mitochondrion inner membrane</keyword>
<keyword id="KW-1185">Reference proteome</keyword>
<keyword id="KW-0808">Transferase</keyword>
<keyword id="KW-0809">Transit peptide</keyword>
<comment type="function">
    <text evidence="1">Catalyzes the biosynthesis of guanidinoacetate, the immediate precursor of creatine. Creatine plays a vital role in energy metabolism in muscle tissues. May play a role in embryonic and central nervous system development (By similarity).</text>
</comment>
<comment type="catalytic activity">
    <reaction evidence="2">
        <text>L-arginine + glycine = guanidinoacetate + L-ornithine</text>
        <dbReference type="Rhea" id="RHEA:13201"/>
        <dbReference type="ChEBI" id="CHEBI:32682"/>
        <dbReference type="ChEBI" id="CHEBI:46911"/>
        <dbReference type="ChEBI" id="CHEBI:57305"/>
        <dbReference type="ChEBI" id="CHEBI:57742"/>
        <dbReference type="EC" id="2.1.4.1"/>
    </reaction>
</comment>
<comment type="pathway">
    <text evidence="2">Amine and polyamine biosynthesis; creatine biosynthesis; creatine from L-arginine and glycine: step 1/2.</text>
</comment>
<comment type="subunit">
    <text evidence="2">Homodimer.</text>
</comment>
<comment type="subcellular location">
    <subcellularLocation>
        <location evidence="2">Mitochondrion inner membrane</location>
    </subcellularLocation>
</comment>
<comment type="similarity">
    <text evidence="4">Belongs to the amidinotransferase family.</text>
</comment>
<proteinExistence type="evidence at transcript level"/>
<name>GATM_XENTR</name>
<sequence>MLRVRCVRGGSRGAEAVHYIGSMLRKGFVGWVQRSFQSTQAAAVSEKPCAADEKVSDTAVQECPVCSYNEWDPLEEVIVGRPENANVPPFSVEVKANTYEKYWPFYQKHGGQSFPVEHVKKATEEIEEMCNVLRHEGVVVQRPEVIDWSVKYKTPDFESTGMYAAMPRDILLVVGNEIIEAPMAWRARFFEYRAYRPLIKDYFRRGAKWTTAPKPTMADELYDQDYPIRTVEDRHKLAAMGKFVTTEFEPCFDAADFMRAGRDIFAQRSQVTNYLGIEWMRRHLAPDYKVHIISFKDPNPMHIDATFNIIGPGLVLSNPDRPCHQIELFKKAGWTVVTPPIPLIPDNHPLWMSSKWLSMNVLMLDEKRVMVDANETSIQKMFEKLGISTIKVNIRHANSLGGGFHCWTCDIRRRGTLQSYFS</sequence>
<organism>
    <name type="scientific">Xenopus tropicalis</name>
    <name type="common">Western clawed frog</name>
    <name type="synonym">Silurana tropicalis</name>
    <dbReference type="NCBI Taxonomy" id="8364"/>
    <lineage>
        <taxon>Eukaryota</taxon>
        <taxon>Metazoa</taxon>
        <taxon>Chordata</taxon>
        <taxon>Craniata</taxon>
        <taxon>Vertebrata</taxon>
        <taxon>Euteleostomi</taxon>
        <taxon>Amphibia</taxon>
        <taxon>Batrachia</taxon>
        <taxon>Anura</taxon>
        <taxon>Pipoidea</taxon>
        <taxon>Pipidae</taxon>
        <taxon>Xenopodinae</taxon>
        <taxon>Xenopus</taxon>
        <taxon>Silurana</taxon>
    </lineage>
</organism>
<feature type="transit peptide" description="Mitochondrion" evidence="3">
    <location>
        <begin position="1"/>
        <end position="37"/>
    </location>
</feature>
<feature type="chain" id="PRO_0000399098" description="Glycine amidinotransferase, mitochondrial" evidence="3">
    <location>
        <begin position="38"/>
        <end position="422"/>
    </location>
</feature>
<feature type="active site" evidence="2">
    <location>
        <position position="253"/>
    </location>
</feature>
<feature type="active site" evidence="2">
    <location>
        <position position="302"/>
    </location>
</feature>
<feature type="active site" description="Amidino-cysteine intermediate" evidence="2">
    <location>
        <position position="406"/>
    </location>
</feature>
<feature type="sequence conflict" description="In Ref. 1; CAJ82904." evidence="5" ref="1">
    <original>A</original>
    <variation>T</variation>
    <location>
        <position position="50"/>
    </location>
</feature>
<accession>Q6P832</accession>
<accession>Q28HI2</accession>
<dbReference type="EC" id="2.1.4.1" evidence="2"/>
<dbReference type="EMBL" id="CR760875">
    <property type="protein sequence ID" value="CAJ82904.1"/>
    <property type="molecule type" value="mRNA"/>
</dbReference>
<dbReference type="EMBL" id="BC061399">
    <property type="protein sequence ID" value="AAH61399.1"/>
    <property type="molecule type" value="mRNA"/>
</dbReference>
<dbReference type="RefSeq" id="NP_988971.1">
    <property type="nucleotide sequence ID" value="NM_203640.1"/>
</dbReference>
<dbReference type="SMR" id="Q6P832"/>
<dbReference type="FunCoup" id="Q6P832">
    <property type="interactions" value="284"/>
</dbReference>
<dbReference type="STRING" id="8364.ENSXETP00000054208"/>
<dbReference type="PaxDb" id="8364-ENSXETP00000035125"/>
<dbReference type="DNASU" id="394568"/>
<dbReference type="GeneID" id="394568"/>
<dbReference type="KEGG" id="xtr:394568"/>
<dbReference type="AGR" id="Xenbase:XB-GENE-974514"/>
<dbReference type="CTD" id="2628"/>
<dbReference type="Xenbase" id="XB-GENE-974514">
    <property type="gene designation" value="gatm"/>
</dbReference>
<dbReference type="eggNOG" id="ENOG502QVCA">
    <property type="taxonomic scope" value="Eukaryota"/>
</dbReference>
<dbReference type="HOGENOM" id="CLU_047415_1_0_1"/>
<dbReference type="InParanoid" id="Q6P832"/>
<dbReference type="OMA" id="YPIHIDA"/>
<dbReference type="OrthoDB" id="10264242at2759"/>
<dbReference type="PhylomeDB" id="Q6P832"/>
<dbReference type="TreeFam" id="TF300256"/>
<dbReference type="Reactome" id="R-XTR-71288">
    <property type="pathway name" value="Creatine metabolism"/>
</dbReference>
<dbReference type="UniPathway" id="UPA00104">
    <property type="reaction ID" value="UER00579"/>
</dbReference>
<dbReference type="Proteomes" id="UP000008143">
    <property type="component" value="Chromosome 3"/>
</dbReference>
<dbReference type="Bgee" id="ENSXETG00000016109">
    <property type="expression patterns" value="Expressed in neurula embryo and 4 other cell types or tissues"/>
</dbReference>
<dbReference type="ExpressionAtlas" id="Q6P832">
    <property type="expression patterns" value="baseline"/>
</dbReference>
<dbReference type="GO" id="GO:0005743">
    <property type="term" value="C:mitochondrial inner membrane"/>
    <property type="evidence" value="ECO:0007669"/>
    <property type="project" value="UniProtKB-SubCell"/>
</dbReference>
<dbReference type="GO" id="GO:0015068">
    <property type="term" value="F:glycine amidinotransferase activity"/>
    <property type="evidence" value="ECO:0000250"/>
    <property type="project" value="UniProtKB"/>
</dbReference>
<dbReference type="GO" id="GO:0006601">
    <property type="term" value="P:creatine biosynthetic process"/>
    <property type="evidence" value="ECO:0007669"/>
    <property type="project" value="UniProtKB-UniPathway"/>
</dbReference>
<dbReference type="CDD" id="cd21136">
    <property type="entry name" value="amidinotransferase_AGAT-like"/>
    <property type="match status" value="1"/>
</dbReference>
<dbReference type="FunFam" id="3.75.10.10:FF:000005">
    <property type="entry name" value="Glycine amidinotransferase, mitochondrial"/>
    <property type="match status" value="1"/>
</dbReference>
<dbReference type="Gene3D" id="3.75.10.10">
    <property type="entry name" value="L-arginine/glycine Amidinotransferase, Chain A"/>
    <property type="match status" value="1"/>
</dbReference>
<dbReference type="InterPro" id="IPR033195">
    <property type="entry name" value="AmidinoTrfase"/>
</dbReference>
<dbReference type="PANTHER" id="PTHR10488">
    <property type="entry name" value="GLYCINE AMIDINOTRANSFERASE, MITOCHONDRIAL"/>
    <property type="match status" value="1"/>
</dbReference>
<dbReference type="PANTHER" id="PTHR10488:SF1">
    <property type="entry name" value="GLYCINE AMIDINOTRANSFERASE, MITOCHONDRIAL"/>
    <property type="match status" value="1"/>
</dbReference>
<dbReference type="SUPFAM" id="SSF55909">
    <property type="entry name" value="Pentein"/>
    <property type="match status" value="1"/>
</dbReference>